<keyword id="KW-0963">Cytoplasm</keyword>
<keyword id="KW-0804">Transcription</keyword>
<keyword id="KW-0805">Transcription regulation</keyword>
<evidence type="ECO:0000255" key="1">
    <source>
        <dbReference type="HAMAP-Rule" id="MF_01181"/>
    </source>
</evidence>
<sequence>MLNQLENLTERVGGSNKLVDRWLDVRKHLLVAYYNLVGIKPGKESYMRLNEKALDDFCQSLVDYLSAGHFSIYERILHKLEGNGQLLHAAKIWPLLEDNTQRIMDYYDTSLETAIDHDNCLEFQQALSDIGEALEARFVLEDKLIMLVFDAMHDGARVKRPA</sequence>
<dbReference type="EMBL" id="CP001120">
    <property type="protein sequence ID" value="ACF66127.1"/>
    <property type="molecule type" value="Genomic_DNA"/>
</dbReference>
<dbReference type="RefSeq" id="WP_000934315.1">
    <property type="nucleotide sequence ID" value="NC_011083.1"/>
</dbReference>
<dbReference type="SMR" id="B4TCT4"/>
<dbReference type="KEGG" id="seh:SeHA_C4496"/>
<dbReference type="HOGENOM" id="CLU_142729_0_0_6"/>
<dbReference type="Proteomes" id="UP000001866">
    <property type="component" value="Chromosome"/>
</dbReference>
<dbReference type="GO" id="GO:0005737">
    <property type="term" value="C:cytoplasm"/>
    <property type="evidence" value="ECO:0007669"/>
    <property type="project" value="UniProtKB-SubCell"/>
</dbReference>
<dbReference type="GO" id="GO:0006355">
    <property type="term" value="P:regulation of DNA-templated transcription"/>
    <property type="evidence" value="ECO:0007669"/>
    <property type="project" value="InterPro"/>
</dbReference>
<dbReference type="FunFam" id="1.20.120.1370:FF:000001">
    <property type="entry name" value="Regulator of sigma D"/>
    <property type="match status" value="1"/>
</dbReference>
<dbReference type="Gene3D" id="1.20.120.1370">
    <property type="entry name" value="Regulator of RNA polymerase sigma(70) subunit, domain 4"/>
    <property type="match status" value="1"/>
</dbReference>
<dbReference type="HAMAP" id="MF_01181">
    <property type="entry name" value="Rsd"/>
    <property type="match status" value="1"/>
</dbReference>
<dbReference type="InterPro" id="IPR038309">
    <property type="entry name" value="Rsd/AlgQ_sf"/>
</dbReference>
<dbReference type="InterPro" id="IPR023785">
    <property type="entry name" value="Sigma70_reg_Rsd"/>
</dbReference>
<dbReference type="InterPro" id="IPR007448">
    <property type="entry name" value="Sigma70_reg_Rsd_AlgQ"/>
</dbReference>
<dbReference type="NCBIfam" id="NF008723">
    <property type="entry name" value="PRK11718.1"/>
    <property type="match status" value="1"/>
</dbReference>
<dbReference type="Pfam" id="PF04353">
    <property type="entry name" value="Rsd_AlgQ"/>
    <property type="match status" value="1"/>
</dbReference>
<dbReference type="PIRSF" id="PIRSF016548">
    <property type="entry name" value="Rsd_AlgQ"/>
    <property type="match status" value="1"/>
</dbReference>
<name>RSD_SALHS</name>
<feature type="chain" id="PRO_1000138201" description="Regulator of sigma D">
    <location>
        <begin position="1"/>
        <end position="162"/>
    </location>
</feature>
<reference key="1">
    <citation type="journal article" date="2011" name="J. Bacteriol.">
        <title>Comparative genomics of 28 Salmonella enterica isolates: evidence for CRISPR-mediated adaptive sublineage evolution.</title>
        <authorList>
            <person name="Fricke W.F."/>
            <person name="Mammel M.K."/>
            <person name="McDermott P.F."/>
            <person name="Tartera C."/>
            <person name="White D.G."/>
            <person name="Leclerc J.E."/>
            <person name="Ravel J."/>
            <person name="Cebula T.A."/>
        </authorList>
    </citation>
    <scope>NUCLEOTIDE SEQUENCE [LARGE SCALE GENOMIC DNA]</scope>
    <source>
        <strain>SL476</strain>
    </source>
</reference>
<proteinExistence type="inferred from homology"/>
<gene>
    <name evidence="1" type="primary">rsd</name>
    <name type="ordered locus">SeHA_C4496</name>
</gene>
<organism>
    <name type="scientific">Salmonella heidelberg (strain SL476)</name>
    <dbReference type="NCBI Taxonomy" id="454169"/>
    <lineage>
        <taxon>Bacteria</taxon>
        <taxon>Pseudomonadati</taxon>
        <taxon>Pseudomonadota</taxon>
        <taxon>Gammaproteobacteria</taxon>
        <taxon>Enterobacterales</taxon>
        <taxon>Enterobacteriaceae</taxon>
        <taxon>Salmonella</taxon>
    </lineage>
</organism>
<comment type="function">
    <text evidence="1">Binds RpoD and negatively regulates RpoD-mediated transcription activation by preventing the interaction between the primary sigma factor RpoD with the catalytic core of the RNA polymerase and with promoter DNA. May be involved in replacement of the RNA polymerase sigma subunit from RpoD to RpoS during the transition from exponential growth to the stationary phase.</text>
</comment>
<comment type="subunit">
    <text evidence="1">Interacts with RpoD.</text>
</comment>
<comment type="subcellular location">
    <subcellularLocation>
        <location evidence="1">Cytoplasm</location>
    </subcellularLocation>
</comment>
<comment type="similarity">
    <text evidence="1">Belongs to the Rsd/AlgQ family.</text>
</comment>
<accession>B4TCT4</accession>
<protein>
    <recommendedName>
        <fullName evidence="1">Regulator of sigma D</fullName>
    </recommendedName>
</protein>